<feature type="chain" id="PRO_1000049488" description="Glycerol-3-phosphate dehydrogenase [NAD(P)+]">
    <location>
        <begin position="1"/>
        <end position="335"/>
    </location>
</feature>
<feature type="active site" description="Proton acceptor" evidence="1">
    <location>
        <position position="195"/>
    </location>
</feature>
<feature type="binding site" evidence="1">
    <location>
        <position position="14"/>
    </location>
    <ligand>
        <name>NADPH</name>
        <dbReference type="ChEBI" id="CHEBI:57783"/>
    </ligand>
</feature>
<feature type="binding site" evidence="1">
    <location>
        <position position="33"/>
    </location>
    <ligand>
        <name>NADPH</name>
        <dbReference type="ChEBI" id="CHEBI:57783"/>
    </ligand>
</feature>
<feature type="binding site" evidence="1">
    <location>
        <position position="111"/>
    </location>
    <ligand>
        <name>NADPH</name>
        <dbReference type="ChEBI" id="CHEBI:57783"/>
    </ligand>
</feature>
<feature type="binding site" evidence="1">
    <location>
        <position position="111"/>
    </location>
    <ligand>
        <name>sn-glycerol 3-phosphate</name>
        <dbReference type="ChEBI" id="CHEBI:57597"/>
    </ligand>
</feature>
<feature type="binding site" evidence="1">
    <location>
        <position position="140"/>
    </location>
    <ligand>
        <name>sn-glycerol 3-phosphate</name>
        <dbReference type="ChEBI" id="CHEBI:57597"/>
    </ligand>
</feature>
<feature type="binding site" evidence="1">
    <location>
        <position position="142"/>
    </location>
    <ligand>
        <name>sn-glycerol 3-phosphate</name>
        <dbReference type="ChEBI" id="CHEBI:57597"/>
    </ligand>
</feature>
<feature type="binding site" evidence="1">
    <location>
        <position position="144"/>
    </location>
    <ligand>
        <name>NADPH</name>
        <dbReference type="ChEBI" id="CHEBI:57783"/>
    </ligand>
</feature>
<feature type="binding site" evidence="1">
    <location>
        <position position="195"/>
    </location>
    <ligand>
        <name>sn-glycerol 3-phosphate</name>
        <dbReference type="ChEBI" id="CHEBI:57597"/>
    </ligand>
</feature>
<feature type="binding site" evidence="1">
    <location>
        <position position="248"/>
    </location>
    <ligand>
        <name>sn-glycerol 3-phosphate</name>
        <dbReference type="ChEBI" id="CHEBI:57597"/>
    </ligand>
</feature>
<feature type="binding site" evidence="1">
    <location>
        <position position="258"/>
    </location>
    <ligand>
        <name>sn-glycerol 3-phosphate</name>
        <dbReference type="ChEBI" id="CHEBI:57597"/>
    </ligand>
</feature>
<feature type="binding site" evidence="1">
    <location>
        <position position="259"/>
    </location>
    <ligand>
        <name>NADPH</name>
        <dbReference type="ChEBI" id="CHEBI:57783"/>
    </ligand>
</feature>
<feature type="binding site" evidence="1">
    <location>
        <position position="259"/>
    </location>
    <ligand>
        <name>sn-glycerol 3-phosphate</name>
        <dbReference type="ChEBI" id="CHEBI:57597"/>
    </ligand>
</feature>
<feature type="binding site" evidence="1">
    <location>
        <position position="260"/>
    </location>
    <ligand>
        <name>sn-glycerol 3-phosphate</name>
        <dbReference type="ChEBI" id="CHEBI:57597"/>
    </ligand>
</feature>
<feature type="binding site" evidence="1">
    <location>
        <position position="283"/>
    </location>
    <ligand>
        <name>NADPH</name>
        <dbReference type="ChEBI" id="CHEBI:57783"/>
    </ligand>
</feature>
<feature type="binding site" evidence="1">
    <location>
        <position position="285"/>
    </location>
    <ligand>
        <name>NADPH</name>
        <dbReference type="ChEBI" id="CHEBI:57783"/>
    </ligand>
</feature>
<reference key="1">
    <citation type="journal article" date="2010" name="Genome Biol. Evol.">
        <title>Continuing evolution of Burkholderia mallei through genome reduction and large-scale rearrangements.</title>
        <authorList>
            <person name="Losada L."/>
            <person name="Ronning C.M."/>
            <person name="DeShazer D."/>
            <person name="Woods D."/>
            <person name="Fedorova N."/>
            <person name="Kim H.S."/>
            <person name="Shabalina S.A."/>
            <person name="Pearson T.R."/>
            <person name="Brinkac L."/>
            <person name="Tan P."/>
            <person name="Nandi T."/>
            <person name="Crabtree J."/>
            <person name="Badger J."/>
            <person name="Beckstrom-Sternberg S."/>
            <person name="Saqib M."/>
            <person name="Schutzer S.E."/>
            <person name="Keim P."/>
            <person name="Nierman W.C."/>
        </authorList>
    </citation>
    <scope>NUCLEOTIDE SEQUENCE [LARGE SCALE GENOMIC DNA]</scope>
    <source>
        <strain>NCTC 10247</strain>
    </source>
</reference>
<protein>
    <recommendedName>
        <fullName evidence="1">Glycerol-3-phosphate dehydrogenase [NAD(P)+]</fullName>
        <ecNumber evidence="1">1.1.1.94</ecNumber>
    </recommendedName>
    <alternativeName>
        <fullName evidence="1">NAD(P)(+)-dependent glycerol-3-phosphate dehydrogenase</fullName>
    </alternativeName>
    <alternativeName>
        <fullName evidence="1">NAD(P)H-dependent dihydroxyacetone-phosphate reductase</fullName>
    </alternativeName>
</protein>
<accession>A3MQ27</accession>
<organism>
    <name type="scientific">Burkholderia mallei (strain NCTC 10247)</name>
    <dbReference type="NCBI Taxonomy" id="320389"/>
    <lineage>
        <taxon>Bacteria</taxon>
        <taxon>Pseudomonadati</taxon>
        <taxon>Pseudomonadota</taxon>
        <taxon>Betaproteobacteria</taxon>
        <taxon>Burkholderiales</taxon>
        <taxon>Burkholderiaceae</taxon>
        <taxon>Burkholderia</taxon>
        <taxon>pseudomallei group</taxon>
    </lineage>
</organism>
<sequence>MLSMKVAVLGAGAWGTALAAHLAVRHDTLLWARDAALVAELAARRENARYLGGVALPPGLRYEADLATALSHAQADDALCVIAAPVAGLRALCRAMRDARRVPAHFVWVCKGFEADTRRLPHQMVAEELPDHASYGVLSGPSFAREVAQGLPVALTVASASAACRERTLAAFHHGAMRIYTGDDVVGVEVGGAVKNVLAIATGIADGLGLGLNARAALVTRGLAEMSRLGVALGGRAETFTGLTGLGDLILTATGDLSRNRSVGLQLAAGRSLDDILAALGHVAEGVRCARAVLSIARERGVDMPITEAVCAVLFDGVAPRDAVSGLLRRDAKAE</sequence>
<proteinExistence type="inferred from homology"/>
<comment type="function">
    <text evidence="1">Catalyzes the reduction of the glycolytic intermediate dihydroxyacetone phosphate (DHAP) to sn-glycerol 3-phosphate (G3P), the key precursor for phospholipid synthesis.</text>
</comment>
<comment type="catalytic activity">
    <reaction evidence="1">
        <text>sn-glycerol 3-phosphate + NAD(+) = dihydroxyacetone phosphate + NADH + H(+)</text>
        <dbReference type="Rhea" id="RHEA:11092"/>
        <dbReference type="ChEBI" id="CHEBI:15378"/>
        <dbReference type="ChEBI" id="CHEBI:57540"/>
        <dbReference type="ChEBI" id="CHEBI:57597"/>
        <dbReference type="ChEBI" id="CHEBI:57642"/>
        <dbReference type="ChEBI" id="CHEBI:57945"/>
        <dbReference type="EC" id="1.1.1.94"/>
    </reaction>
    <physiologicalReaction direction="right-to-left" evidence="1">
        <dbReference type="Rhea" id="RHEA:11094"/>
    </physiologicalReaction>
</comment>
<comment type="catalytic activity">
    <reaction evidence="1">
        <text>sn-glycerol 3-phosphate + NADP(+) = dihydroxyacetone phosphate + NADPH + H(+)</text>
        <dbReference type="Rhea" id="RHEA:11096"/>
        <dbReference type="ChEBI" id="CHEBI:15378"/>
        <dbReference type="ChEBI" id="CHEBI:57597"/>
        <dbReference type="ChEBI" id="CHEBI:57642"/>
        <dbReference type="ChEBI" id="CHEBI:57783"/>
        <dbReference type="ChEBI" id="CHEBI:58349"/>
        <dbReference type="EC" id="1.1.1.94"/>
    </reaction>
    <physiologicalReaction direction="right-to-left" evidence="1">
        <dbReference type="Rhea" id="RHEA:11098"/>
    </physiologicalReaction>
</comment>
<comment type="pathway">
    <text evidence="1">Membrane lipid metabolism; glycerophospholipid metabolism.</text>
</comment>
<comment type="subcellular location">
    <subcellularLocation>
        <location evidence="1">Cytoplasm</location>
    </subcellularLocation>
</comment>
<comment type="similarity">
    <text evidence="1">Belongs to the NAD-dependent glycerol-3-phosphate dehydrogenase family.</text>
</comment>
<name>GPDA_BURM7</name>
<evidence type="ECO:0000255" key="1">
    <source>
        <dbReference type="HAMAP-Rule" id="MF_00394"/>
    </source>
</evidence>
<gene>
    <name evidence="1" type="primary">gpsA</name>
    <name type="ordered locus">BMA10247_2842</name>
</gene>
<dbReference type="EC" id="1.1.1.94" evidence="1"/>
<dbReference type="EMBL" id="CP000548">
    <property type="protein sequence ID" value="ABO06114.1"/>
    <property type="molecule type" value="Genomic_DNA"/>
</dbReference>
<dbReference type="SMR" id="A3MQ27"/>
<dbReference type="KEGG" id="bmn:BMA10247_2842"/>
<dbReference type="UniPathway" id="UPA00940"/>
<dbReference type="GO" id="GO:0005829">
    <property type="term" value="C:cytosol"/>
    <property type="evidence" value="ECO:0007669"/>
    <property type="project" value="TreeGrafter"/>
</dbReference>
<dbReference type="GO" id="GO:0047952">
    <property type="term" value="F:glycerol-3-phosphate dehydrogenase [NAD(P)+] activity"/>
    <property type="evidence" value="ECO:0007669"/>
    <property type="project" value="UniProtKB-UniRule"/>
</dbReference>
<dbReference type="GO" id="GO:0051287">
    <property type="term" value="F:NAD binding"/>
    <property type="evidence" value="ECO:0007669"/>
    <property type="project" value="InterPro"/>
</dbReference>
<dbReference type="GO" id="GO:0005975">
    <property type="term" value="P:carbohydrate metabolic process"/>
    <property type="evidence" value="ECO:0007669"/>
    <property type="project" value="InterPro"/>
</dbReference>
<dbReference type="GO" id="GO:0046167">
    <property type="term" value="P:glycerol-3-phosphate biosynthetic process"/>
    <property type="evidence" value="ECO:0007669"/>
    <property type="project" value="UniProtKB-UniRule"/>
</dbReference>
<dbReference type="GO" id="GO:0046168">
    <property type="term" value="P:glycerol-3-phosphate catabolic process"/>
    <property type="evidence" value="ECO:0007669"/>
    <property type="project" value="InterPro"/>
</dbReference>
<dbReference type="GO" id="GO:0006650">
    <property type="term" value="P:glycerophospholipid metabolic process"/>
    <property type="evidence" value="ECO:0007669"/>
    <property type="project" value="UniProtKB-UniRule"/>
</dbReference>
<dbReference type="GO" id="GO:0008654">
    <property type="term" value="P:phospholipid biosynthetic process"/>
    <property type="evidence" value="ECO:0007669"/>
    <property type="project" value="UniProtKB-KW"/>
</dbReference>
<dbReference type="FunFam" id="1.10.1040.10:FF:000001">
    <property type="entry name" value="Glycerol-3-phosphate dehydrogenase [NAD(P)+]"/>
    <property type="match status" value="1"/>
</dbReference>
<dbReference type="FunFam" id="3.40.50.720:FF:000019">
    <property type="entry name" value="Glycerol-3-phosphate dehydrogenase [NAD(P)+]"/>
    <property type="match status" value="1"/>
</dbReference>
<dbReference type="Gene3D" id="1.10.1040.10">
    <property type="entry name" value="N-(1-d-carboxylethyl)-l-norvaline Dehydrogenase, domain 2"/>
    <property type="match status" value="1"/>
</dbReference>
<dbReference type="Gene3D" id="3.40.50.720">
    <property type="entry name" value="NAD(P)-binding Rossmann-like Domain"/>
    <property type="match status" value="1"/>
</dbReference>
<dbReference type="HAMAP" id="MF_00394">
    <property type="entry name" value="NAD_Glyc3P_dehydrog"/>
    <property type="match status" value="1"/>
</dbReference>
<dbReference type="InterPro" id="IPR008927">
    <property type="entry name" value="6-PGluconate_DH-like_C_sf"/>
</dbReference>
<dbReference type="InterPro" id="IPR013328">
    <property type="entry name" value="6PGD_dom2"/>
</dbReference>
<dbReference type="InterPro" id="IPR006168">
    <property type="entry name" value="G3P_DH_NAD-dep"/>
</dbReference>
<dbReference type="InterPro" id="IPR006109">
    <property type="entry name" value="G3P_DH_NAD-dep_C"/>
</dbReference>
<dbReference type="InterPro" id="IPR011128">
    <property type="entry name" value="G3P_DH_NAD-dep_N"/>
</dbReference>
<dbReference type="InterPro" id="IPR036291">
    <property type="entry name" value="NAD(P)-bd_dom_sf"/>
</dbReference>
<dbReference type="NCBIfam" id="NF000940">
    <property type="entry name" value="PRK00094.1-2"/>
    <property type="match status" value="1"/>
</dbReference>
<dbReference type="NCBIfam" id="NF000942">
    <property type="entry name" value="PRK00094.1-4"/>
    <property type="match status" value="1"/>
</dbReference>
<dbReference type="PANTHER" id="PTHR11728">
    <property type="entry name" value="GLYCEROL-3-PHOSPHATE DEHYDROGENASE"/>
    <property type="match status" value="1"/>
</dbReference>
<dbReference type="PANTHER" id="PTHR11728:SF1">
    <property type="entry name" value="GLYCEROL-3-PHOSPHATE DEHYDROGENASE [NAD(+)] 2, CHLOROPLASTIC"/>
    <property type="match status" value="1"/>
</dbReference>
<dbReference type="Pfam" id="PF07479">
    <property type="entry name" value="NAD_Gly3P_dh_C"/>
    <property type="match status" value="1"/>
</dbReference>
<dbReference type="Pfam" id="PF01210">
    <property type="entry name" value="NAD_Gly3P_dh_N"/>
    <property type="match status" value="1"/>
</dbReference>
<dbReference type="PIRSF" id="PIRSF000114">
    <property type="entry name" value="Glycerol-3-P_dh"/>
    <property type="match status" value="1"/>
</dbReference>
<dbReference type="PRINTS" id="PR00077">
    <property type="entry name" value="GPDHDRGNASE"/>
</dbReference>
<dbReference type="SUPFAM" id="SSF48179">
    <property type="entry name" value="6-phosphogluconate dehydrogenase C-terminal domain-like"/>
    <property type="match status" value="1"/>
</dbReference>
<dbReference type="SUPFAM" id="SSF51735">
    <property type="entry name" value="NAD(P)-binding Rossmann-fold domains"/>
    <property type="match status" value="1"/>
</dbReference>
<dbReference type="PROSITE" id="PS00957">
    <property type="entry name" value="NAD_G3PDH"/>
    <property type="match status" value="1"/>
</dbReference>
<keyword id="KW-0963">Cytoplasm</keyword>
<keyword id="KW-0444">Lipid biosynthesis</keyword>
<keyword id="KW-0443">Lipid metabolism</keyword>
<keyword id="KW-0520">NAD</keyword>
<keyword id="KW-0521">NADP</keyword>
<keyword id="KW-0547">Nucleotide-binding</keyword>
<keyword id="KW-0560">Oxidoreductase</keyword>
<keyword id="KW-0594">Phospholipid biosynthesis</keyword>
<keyword id="KW-1208">Phospholipid metabolism</keyword>